<accession>A7NR49</accession>
<keyword id="KW-1185">Reference proteome</keyword>
<keyword id="KW-0687">Ribonucleoprotein</keyword>
<keyword id="KW-0689">Ribosomal protein</keyword>
<keyword id="KW-0694">RNA-binding</keyword>
<keyword id="KW-0699">rRNA-binding</keyword>
<reference key="1">
    <citation type="submission" date="2007-08" db="EMBL/GenBank/DDBJ databases">
        <title>Complete sequence of Roseiflexus castenholzii DSM 13941.</title>
        <authorList>
            <consortium name="US DOE Joint Genome Institute"/>
            <person name="Copeland A."/>
            <person name="Lucas S."/>
            <person name="Lapidus A."/>
            <person name="Barry K."/>
            <person name="Glavina del Rio T."/>
            <person name="Dalin E."/>
            <person name="Tice H."/>
            <person name="Pitluck S."/>
            <person name="Thompson L.S."/>
            <person name="Brettin T."/>
            <person name="Bruce D."/>
            <person name="Detter J.C."/>
            <person name="Han C."/>
            <person name="Tapia R."/>
            <person name="Schmutz J."/>
            <person name="Larimer F."/>
            <person name="Land M."/>
            <person name="Hauser L."/>
            <person name="Kyrpides N."/>
            <person name="Mikhailova N."/>
            <person name="Bryant D.A."/>
            <person name="Hanada S."/>
            <person name="Tsukatani Y."/>
            <person name="Richardson P."/>
        </authorList>
    </citation>
    <scope>NUCLEOTIDE SEQUENCE [LARGE SCALE GENOMIC DNA]</scope>
    <source>
        <strain>DSM 13941 / HLO8</strain>
    </source>
</reference>
<evidence type="ECO:0000255" key="1">
    <source>
        <dbReference type="HAMAP-Rule" id="MF_01302"/>
    </source>
</evidence>
<evidence type="ECO:0000305" key="2"/>
<proteinExistence type="inferred from homology"/>
<feature type="chain" id="PRO_1000085938" description="Small ribosomal subunit protein uS8">
    <location>
        <begin position="1"/>
        <end position="132"/>
    </location>
</feature>
<gene>
    <name evidence="1" type="primary">rpsH</name>
    <name type="ordered locus">Rcas_4012</name>
</gene>
<sequence>MSVNDPIADMLTRIRNACMARHATVSIPSSKMKLAIAQILKREGFIQDFTVQEGKPYSTIVITLKYTPDRRPVITGLKRVSKPGLRIYTKRADIPRVRGGLGLSILSTPRGVMAGHEAWQQRVGGEVLCYVW</sequence>
<organism>
    <name type="scientific">Roseiflexus castenholzii (strain DSM 13941 / HLO8)</name>
    <dbReference type="NCBI Taxonomy" id="383372"/>
    <lineage>
        <taxon>Bacteria</taxon>
        <taxon>Bacillati</taxon>
        <taxon>Chloroflexota</taxon>
        <taxon>Chloroflexia</taxon>
        <taxon>Chloroflexales</taxon>
        <taxon>Roseiflexineae</taxon>
        <taxon>Roseiflexaceae</taxon>
        <taxon>Roseiflexus</taxon>
    </lineage>
</organism>
<protein>
    <recommendedName>
        <fullName evidence="1">Small ribosomal subunit protein uS8</fullName>
    </recommendedName>
    <alternativeName>
        <fullName evidence="2">30S ribosomal protein S8</fullName>
    </alternativeName>
</protein>
<dbReference type="EMBL" id="CP000804">
    <property type="protein sequence ID" value="ABU60045.1"/>
    <property type="molecule type" value="Genomic_DNA"/>
</dbReference>
<dbReference type="RefSeq" id="WP_012122467.1">
    <property type="nucleotide sequence ID" value="NC_009767.1"/>
</dbReference>
<dbReference type="SMR" id="A7NR49"/>
<dbReference type="STRING" id="383372.Rcas_4012"/>
<dbReference type="KEGG" id="rca:Rcas_4012"/>
<dbReference type="eggNOG" id="COG0096">
    <property type="taxonomic scope" value="Bacteria"/>
</dbReference>
<dbReference type="HOGENOM" id="CLU_098428_0_2_0"/>
<dbReference type="OrthoDB" id="9802617at2"/>
<dbReference type="Proteomes" id="UP000000263">
    <property type="component" value="Chromosome"/>
</dbReference>
<dbReference type="GO" id="GO:1990904">
    <property type="term" value="C:ribonucleoprotein complex"/>
    <property type="evidence" value="ECO:0007669"/>
    <property type="project" value="UniProtKB-KW"/>
</dbReference>
<dbReference type="GO" id="GO:0005840">
    <property type="term" value="C:ribosome"/>
    <property type="evidence" value="ECO:0007669"/>
    <property type="project" value="UniProtKB-KW"/>
</dbReference>
<dbReference type="GO" id="GO:0019843">
    <property type="term" value="F:rRNA binding"/>
    <property type="evidence" value="ECO:0007669"/>
    <property type="project" value="UniProtKB-UniRule"/>
</dbReference>
<dbReference type="GO" id="GO:0003735">
    <property type="term" value="F:structural constituent of ribosome"/>
    <property type="evidence" value="ECO:0007669"/>
    <property type="project" value="InterPro"/>
</dbReference>
<dbReference type="GO" id="GO:0006412">
    <property type="term" value="P:translation"/>
    <property type="evidence" value="ECO:0007669"/>
    <property type="project" value="UniProtKB-UniRule"/>
</dbReference>
<dbReference type="FunFam" id="3.30.1370.30:FF:000002">
    <property type="entry name" value="30S ribosomal protein S8"/>
    <property type="match status" value="1"/>
</dbReference>
<dbReference type="FunFam" id="3.30.1490.10:FF:000001">
    <property type="entry name" value="30S ribosomal protein S8"/>
    <property type="match status" value="1"/>
</dbReference>
<dbReference type="Gene3D" id="3.30.1370.30">
    <property type="match status" value="1"/>
</dbReference>
<dbReference type="Gene3D" id="3.30.1490.10">
    <property type="match status" value="1"/>
</dbReference>
<dbReference type="HAMAP" id="MF_01302_B">
    <property type="entry name" value="Ribosomal_uS8_B"/>
    <property type="match status" value="1"/>
</dbReference>
<dbReference type="InterPro" id="IPR000630">
    <property type="entry name" value="Ribosomal_uS8"/>
</dbReference>
<dbReference type="InterPro" id="IPR035987">
    <property type="entry name" value="Ribosomal_uS8_sf"/>
</dbReference>
<dbReference type="NCBIfam" id="NF001109">
    <property type="entry name" value="PRK00136.1"/>
    <property type="match status" value="1"/>
</dbReference>
<dbReference type="PANTHER" id="PTHR11758">
    <property type="entry name" value="40S RIBOSOMAL PROTEIN S15A"/>
    <property type="match status" value="1"/>
</dbReference>
<dbReference type="Pfam" id="PF00410">
    <property type="entry name" value="Ribosomal_S8"/>
    <property type="match status" value="1"/>
</dbReference>
<dbReference type="SUPFAM" id="SSF56047">
    <property type="entry name" value="Ribosomal protein S8"/>
    <property type="match status" value="1"/>
</dbReference>
<comment type="function">
    <text evidence="1">One of the primary rRNA binding proteins, it binds directly to 16S rRNA central domain where it helps coordinate assembly of the platform of the 30S subunit.</text>
</comment>
<comment type="subunit">
    <text evidence="1">Part of the 30S ribosomal subunit. Contacts proteins S5 and S12.</text>
</comment>
<comment type="similarity">
    <text evidence="1">Belongs to the universal ribosomal protein uS8 family.</text>
</comment>
<name>RS8_ROSCS</name>